<proteinExistence type="inferred from homology"/>
<gene>
    <name evidence="1" type="primary">ribH</name>
    <name type="ordered locus">LA_0463</name>
</gene>
<keyword id="KW-1185">Reference proteome</keyword>
<keyword id="KW-0686">Riboflavin biosynthesis</keyword>
<keyword id="KW-0808">Transferase</keyword>
<evidence type="ECO:0000255" key="1">
    <source>
        <dbReference type="HAMAP-Rule" id="MF_00178"/>
    </source>
</evidence>
<dbReference type="EC" id="2.5.1.78" evidence="1"/>
<dbReference type="EMBL" id="AE010300">
    <property type="protein sequence ID" value="AAN47662.1"/>
    <property type="molecule type" value="Genomic_DNA"/>
</dbReference>
<dbReference type="RefSeq" id="NP_710644.1">
    <property type="nucleotide sequence ID" value="NC_004342.2"/>
</dbReference>
<dbReference type="SMR" id="Q8F8T9"/>
<dbReference type="FunCoup" id="Q8F8T9">
    <property type="interactions" value="487"/>
</dbReference>
<dbReference type="STRING" id="189518.LA_0463"/>
<dbReference type="PaxDb" id="189518-LA_0463"/>
<dbReference type="EnsemblBacteria" id="AAN47662">
    <property type="protein sequence ID" value="AAN47662"/>
    <property type="gene ID" value="LA_0463"/>
</dbReference>
<dbReference type="KEGG" id="lil:LA_0463"/>
<dbReference type="PATRIC" id="fig|189518.3.peg.470"/>
<dbReference type="HOGENOM" id="CLU_089358_1_1_12"/>
<dbReference type="InParanoid" id="Q8F8T9"/>
<dbReference type="OrthoDB" id="9809709at2"/>
<dbReference type="UniPathway" id="UPA00275">
    <property type="reaction ID" value="UER00404"/>
</dbReference>
<dbReference type="Proteomes" id="UP000001408">
    <property type="component" value="Chromosome I"/>
</dbReference>
<dbReference type="GO" id="GO:0005737">
    <property type="term" value="C:cytoplasm"/>
    <property type="evidence" value="ECO:0000318"/>
    <property type="project" value="GO_Central"/>
</dbReference>
<dbReference type="GO" id="GO:0005829">
    <property type="term" value="C:cytosol"/>
    <property type="evidence" value="ECO:0000318"/>
    <property type="project" value="GO_Central"/>
</dbReference>
<dbReference type="GO" id="GO:0009349">
    <property type="term" value="C:riboflavin synthase complex"/>
    <property type="evidence" value="ECO:0007669"/>
    <property type="project" value="InterPro"/>
</dbReference>
<dbReference type="GO" id="GO:0000906">
    <property type="term" value="F:6,7-dimethyl-8-ribityllumazine synthase activity"/>
    <property type="evidence" value="ECO:0000318"/>
    <property type="project" value="GO_Central"/>
</dbReference>
<dbReference type="GO" id="GO:0009231">
    <property type="term" value="P:riboflavin biosynthetic process"/>
    <property type="evidence" value="ECO:0000318"/>
    <property type="project" value="GO_Central"/>
</dbReference>
<dbReference type="CDD" id="cd09209">
    <property type="entry name" value="Lumazine_synthase-I"/>
    <property type="match status" value="1"/>
</dbReference>
<dbReference type="FunFam" id="3.40.50.960:FF:000001">
    <property type="entry name" value="6,7-dimethyl-8-ribityllumazine synthase"/>
    <property type="match status" value="1"/>
</dbReference>
<dbReference type="Gene3D" id="3.40.50.960">
    <property type="entry name" value="Lumazine/riboflavin synthase"/>
    <property type="match status" value="1"/>
</dbReference>
<dbReference type="HAMAP" id="MF_00178">
    <property type="entry name" value="Lumazine_synth"/>
    <property type="match status" value="1"/>
</dbReference>
<dbReference type="InterPro" id="IPR034964">
    <property type="entry name" value="LS"/>
</dbReference>
<dbReference type="InterPro" id="IPR002180">
    <property type="entry name" value="LS/RS"/>
</dbReference>
<dbReference type="InterPro" id="IPR036467">
    <property type="entry name" value="LS/RS_sf"/>
</dbReference>
<dbReference type="NCBIfam" id="TIGR00114">
    <property type="entry name" value="lumazine-synth"/>
    <property type="match status" value="1"/>
</dbReference>
<dbReference type="NCBIfam" id="NF000812">
    <property type="entry name" value="PRK00061.1-4"/>
    <property type="match status" value="1"/>
</dbReference>
<dbReference type="PANTHER" id="PTHR21058:SF0">
    <property type="entry name" value="6,7-DIMETHYL-8-RIBITYLLUMAZINE SYNTHASE"/>
    <property type="match status" value="1"/>
</dbReference>
<dbReference type="PANTHER" id="PTHR21058">
    <property type="entry name" value="6,7-DIMETHYL-8-RIBITYLLUMAZINE SYNTHASE DMRL SYNTHASE LUMAZINE SYNTHASE"/>
    <property type="match status" value="1"/>
</dbReference>
<dbReference type="Pfam" id="PF00885">
    <property type="entry name" value="DMRL_synthase"/>
    <property type="match status" value="1"/>
</dbReference>
<dbReference type="SUPFAM" id="SSF52121">
    <property type="entry name" value="Lumazine synthase"/>
    <property type="match status" value="1"/>
</dbReference>
<accession>Q8F8T9</accession>
<name>RISB_LEPIN</name>
<sequence length="151" mass="15927">MIQELKADLNGKGQKHCVIVSRFNEFITESLLKGALESFRMHGVEDVTVVRVPGAYEMPMVVSKAAASKKYDSIVCLGAVIRGATAHFDLVAGESAKIGSIGVQHSIPVIFGVLTTDTIEQAIERAGTKAGNKGAEAAATAVEMVNLLSLL</sequence>
<feature type="chain" id="PRO_0000134769" description="6,7-dimethyl-8-ribityllumazine synthase">
    <location>
        <begin position="1"/>
        <end position="151"/>
    </location>
</feature>
<feature type="active site" description="Proton donor" evidence="1">
    <location>
        <position position="87"/>
    </location>
</feature>
<feature type="binding site" evidence="1">
    <location>
        <position position="23"/>
    </location>
    <ligand>
        <name>5-amino-6-(D-ribitylamino)uracil</name>
        <dbReference type="ChEBI" id="CHEBI:15934"/>
    </ligand>
</feature>
<feature type="binding site" evidence="1">
    <location>
        <begin position="55"/>
        <end position="57"/>
    </location>
    <ligand>
        <name>5-amino-6-(D-ribitylamino)uracil</name>
        <dbReference type="ChEBI" id="CHEBI:15934"/>
    </ligand>
</feature>
<feature type="binding site" evidence="1">
    <location>
        <begin position="79"/>
        <end position="81"/>
    </location>
    <ligand>
        <name>5-amino-6-(D-ribitylamino)uracil</name>
        <dbReference type="ChEBI" id="CHEBI:15934"/>
    </ligand>
</feature>
<feature type="binding site" evidence="1">
    <location>
        <begin position="84"/>
        <end position="85"/>
    </location>
    <ligand>
        <name>(2S)-2-hydroxy-3-oxobutyl phosphate</name>
        <dbReference type="ChEBI" id="CHEBI:58830"/>
    </ligand>
</feature>
<feature type="binding site" evidence="1">
    <location>
        <position position="111"/>
    </location>
    <ligand>
        <name>5-amino-6-(D-ribitylamino)uracil</name>
        <dbReference type="ChEBI" id="CHEBI:15934"/>
    </ligand>
</feature>
<feature type="binding site" evidence="1">
    <location>
        <position position="125"/>
    </location>
    <ligand>
        <name>(2S)-2-hydroxy-3-oxobutyl phosphate</name>
        <dbReference type="ChEBI" id="CHEBI:58830"/>
    </ligand>
</feature>
<organism>
    <name type="scientific">Leptospira interrogans serogroup Icterohaemorrhagiae serovar Lai (strain 56601)</name>
    <dbReference type="NCBI Taxonomy" id="189518"/>
    <lineage>
        <taxon>Bacteria</taxon>
        <taxon>Pseudomonadati</taxon>
        <taxon>Spirochaetota</taxon>
        <taxon>Spirochaetia</taxon>
        <taxon>Leptospirales</taxon>
        <taxon>Leptospiraceae</taxon>
        <taxon>Leptospira</taxon>
    </lineage>
</organism>
<reference key="1">
    <citation type="journal article" date="2003" name="Nature">
        <title>Unique physiological and pathogenic features of Leptospira interrogans revealed by whole-genome sequencing.</title>
        <authorList>
            <person name="Ren S.-X."/>
            <person name="Fu G."/>
            <person name="Jiang X.-G."/>
            <person name="Zeng R."/>
            <person name="Miao Y.-G."/>
            <person name="Xu H."/>
            <person name="Zhang Y.-X."/>
            <person name="Xiong H."/>
            <person name="Lu G."/>
            <person name="Lu L.-F."/>
            <person name="Jiang H.-Q."/>
            <person name="Jia J."/>
            <person name="Tu Y.-F."/>
            <person name="Jiang J.-X."/>
            <person name="Gu W.-Y."/>
            <person name="Zhang Y.-Q."/>
            <person name="Cai Z."/>
            <person name="Sheng H.-H."/>
            <person name="Yin H.-F."/>
            <person name="Zhang Y."/>
            <person name="Zhu G.-F."/>
            <person name="Wan M."/>
            <person name="Huang H.-L."/>
            <person name="Qian Z."/>
            <person name="Wang S.-Y."/>
            <person name="Ma W."/>
            <person name="Yao Z.-J."/>
            <person name="Shen Y."/>
            <person name="Qiang B.-Q."/>
            <person name="Xia Q.-C."/>
            <person name="Guo X.-K."/>
            <person name="Danchin A."/>
            <person name="Saint Girons I."/>
            <person name="Somerville R.L."/>
            <person name="Wen Y.-M."/>
            <person name="Shi M.-H."/>
            <person name="Chen Z."/>
            <person name="Xu J.-G."/>
            <person name="Zhao G.-P."/>
        </authorList>
    </citation>
    <scope>NUCLEOTIDE SEQUENCE [LARGE SCALE GENOMIC DNA]</scope>
    <source>
        <strain>56601</strain>
    </source>
</reference>
<comment type="function">
    <text evidence="1">Catalyzes the formation of 6,7-dimethyl-8-ribityllumazine by condensation of 5-amino-6-(D-ribitylamino)uracil with 3,4-dihydroxy-2-butanone 4-phosphate. This is the penultimate step in the biosynthesis of riboflavin.</text>
</comment>
<comment type="catalytic activity">
    <reaction evidence="1">
        <text>(2S)-2-hydroxy-3-oxobutyl phosphate + 5-amino-6-(D-ribitylamino)uracil = 6,7-dimethyl-8-(1-D-ribityl)lumazine + phosphate + 2 H2O + H(+)</text>
        <dbReference type="Rhea" id="RHEA:26152"/>
        <dbReference type="ChEBI" id="CHEBI:15377"/>
        <dbReference type="ChEBI" id="CHEBI:15378"/>
        <dbReference type="ChEBI" id="CHEBI:15934"/>
        <dbReference type="ChEBI" id="CHEBI:43474"/>
        <dbReference type="ChEBI" id="CHEBI:58201"/>
        <dbReference type="ChEBI" id="CHEBI:58830"/>
        <dbReference type="EC" id="2.5.1.78"/>
    </reaction>
</comment>
<comment type="pathway">
    <text evidence="1">Cofactor biosynthesis; riboflavin biosynthesis; riboflavin from 2-hydroxy-3-oxobutyl phosphate and 5-amino-6-(D-ribitylamino)uracil: step 1/2.</text>
</comment>
<comment type="similarity">
    <text evidence="1">Belongs to the DMRL synthase family.</text>
</comment>
<protein>
    <recommendedName>
        <fullName evidence="1">6,7-dimethyl-8-ribityllumazine synthase</fullName>
        <shortName evidence="1">DMRL synthase</shortName>
        <shortName evidence="1">LS</shortName>
        <shortName evidence="1">Lumazine synthase</shortName>
        <ecNumber evidence="1">2.5.1.78</ecNumber>
    </recommendedName>
</protein>